<sequence length="298" mass="34684">MKPIAAFQEYLEVERQYSPETVTAYLSDLQEFQAFLKANGGFTDFRHVDDLDVQTYLTDLNKQDLARTSIARKISSLRSFYRYLTRIDVVKRNPFELVELKKQHHHLPQFFYEAEIQELFKTVAGKTPLDQRNRALLEVLYGTGIRVSECAKLTLNQVDFNTALLLIHGKGNKDRYVPFGQYAQQALRTYLKDGRQVLMAKSQAQHRYVFVNQYGRPITSRGIEYILDQLIKQTTLTANIHPHMLRHSFATHMLDHGADLRTVQELLGHASLSTTQIYTHVTMAHLKNEYMKYYPKHN</sequence>
<evidence type="ECO:0000255" key="1">
    <source>
        <dbReference type="HAMAP-Rule" id="MF_01808"/>
    </source>
</evidence>
<evidence type="ECO:0000255" key="2">
    <source>
        <dbReference type="PROSITE-ProRule" id="PRU01246"/>
    </source>
</evidence>
<evidence type="ECO:0000255" key="3">
    <source>
        <dbReference type="PROSITE-ProRule" id="PRU01248"/>
    </source>
</evidence>
<protein>
    <recommendedName>
        <fullName evidence="1">Tyrosine recombinase XerC</fullName>
    </recommendedName>
</protein>
<dbReference type="EMBL" id="CP000423">
    <property type="protein sequence ID" value="ABJ70181.1"/>
    <property type="molecule type" value="Genomic_DNA"/>
</dbReference>
<dbReference type="RefSeq" id="WP_003570336.1">
    <property type="nucleotide sequence ID" value="NC_008526.1"/>
</dbReference>
<dbReference type="RefSeq" id="YP_806623.1">
    <property type="nucleotide sequence ID" value="NC_008526.1"/>
</dbReference>
<dbReference type="SMR" id="Q039E1"/>
<dbReference type="STRING" id="321967.LSEI_1403"/>
<dbReference type="PaxDb" id="321967-LSEI_1403"/>
<dbReference type="KEGG" id="lca:LSEI_1403"/>
<dbReference type="PATRIC" id="fig|321967.11.peg.1381"/>
<dbReference type="HOGENOM" id="CLU_027562_9_0_9"/>
<dbReference type="Proteomes" id="UP000001651">
    <property type="component" value="Chromosome"/>
</dbReference>
<dbReference type="GO" id="GO:0005737">
    <property type="term" value="C:cytoplasm"/>
    <property type="evidence" value="ECO:0007669"/>
    <property type="project" value="UniProtKB-SubCell"/>
</dbReference>
<dbReference type="GO" id="GO:0003677">
    <property type="term" value="F:DNA binding"/>
    <property type="evidence" value="ECO:0007669"/>
    <property type="project" value="UniProtKB-KW"/>
</dbReference>
<dbReference type="GO" id="GO:0009037">
    <property type="term" value="F:tyrosine-based site-specific recombinase activity"/>
    <property type="evidence" value="ECO:0007669"/>
    <property type="project" value="UniProtKB-UniRule"/>
</dbReference>
<dbReference type="GO" id="GO:0051301">
    <property type="term" value="P:cell division"/>
    <property type="evidence" value="ECO:0007669"/>
    <property type="project" value="UniProtKB-KW"/>
</dbReference>
<dbReference type="GO" id="GO:0007059">
    <property type="term" value="P:chromosome segregation"/>
    <property type="evidence" value="ECO:0007669"/>
    <property type="project" value="UniProtKB-UniRule"/>
</dbReference>
<dbReference type="GO" id="GO:0006313">
    <property type="term" value="P:DNA transposition"/>
    <property type="evidence" value="ECO:0007669"/>
    <property type="project" value="UniProtKB-UniRule"/>
</dbReference>
<dbReference type="CDD" id="cd00798">
    <property type="entry name" value="INT_XerDC_C"/>
    <property type="match status" value="1"/>
</dbReference>
<dbReference type="Gene3D" id="1.10.150.130">
    <property type="match status" value="1"/>
</dbReference>
<dbReference type="Gene3D" id="1.10.443.10">
    <property type="entry name" value="Intergrase catalytic core"/>
    <property type="match status" value="1"/>
</dbReference>
<dbReference type="HAMAP" id="MF_01808">
    <property type="entry name" value="Recomb_XerC_XerD"/>
    <property type="match status" value="1"/>
</dbReference>
<dbReference type="InterPro" id="IPR044068">
    <property type="entry name" value="CB"/>
</dbReference>
<dbReference type="InterPro" id="IPR011010">
    <property type="entry name" value="DNA_brk_join_enz"/>
</dbReference>
<dbReference type="InterPro" id="IPR013762">
    <property type="entry name" value="Integrase-like_cat_sf"/>
</dbReference>
<dbReference type="InterPro" id="IPR002104">
    <property type="entry name" value="Integrase_catalytic"/>
</dbReference>
<dbReference type="InterPro" id="IPR010998">
    <property type="entry name" value="Integrase_recombinase_N"/>
</dbReference>
<dbReference type="InterPro" id="IPR004107">
    <property type="entry name" value="Integrase_SAM-like_N"/>
</dbReference>
<dbReference type="InterPro" id="IPR011931">
    <property type="entry name" value="Recomb_XerC"/>
</dbReference>
<dbReference type="InterPro" id="IPR023009">
    <property type="entry name" value="Tyrosine_recombinase_XerC/XerD"/>
</dbReference>
<dbReference type="InterPro" id="IPR050090">
    <property type="entry name" value="Tyrosine_recombinase_XerCD"/>
</dbReference>
<dbReference type="NCBIfam" id="NF001399">
    <property type="entry name" value="PRK00283.1"/>
    <property type="match status" value="1"/>
</dbReference>
<dbReference type="NCBIfam" id="NF040815">
    <property type="entry name" value="recomb_XerA_Arch"/>
    <property type="match status" value="1"/>
</dbReference>
<dbReference type="NCBIfam" id="TIGR02224">
    <property type="entry name" value="recomb_XerC"/>
    <property type="match status" value="1"/>
</dbReference>
<dbReference type="PANTHER" id="PTHR30349">
    <property type="entry name" value="PHAGE INTEGRASE-RELATED"/>
    <property type="match status" value="1"/>
</dbReference>
<dbReference type="PANTHER" id="PTHR30349:SF77">
    <property type="entry name" value="TYROSINE RECOMBINASE XERC"/>
    <property type="match status" value="1"/>
</dbReference>
<dbReference type="Pfam" id="PF02899">
    <property type="entry name" value="Phage_int_SAM_1"/>
    <property type="match status" value="1"/>
</dbReference>
<dbReference type="Pfam" id="PF00589">
    <property type="entry name" value="Phage_integrase"/>
    <property type="match status" value="1"/>
</dbReference>
<dbReference type="SUPFAM" id="SSF56349">
    <property type="entry name" value="DNA breaking-rejoining enzymes"/>
    <property type="match status" value="1"/>
</dbReference>
<dbReference type="PROSITE" id="PS51900">
    <property type="entry name" value="CB"/>
    <property type="match status" value="1"/>
</dbReference>
<dbReference type="PROSITE" id="PS51898">
    <property type="entry name" value="TYR_RECOMBINASE"/>
    <property type="match status" value="1"/>
</dbReference>
<gene>
    <name evidence="1" type="primary">xerC</name>
    <name type="ordered locus">LSEI_1403</name>
</gene>
<keyword id="KW-0131">Cell cycle</keyword>
<keyword id="KW-0132">Cell division</keyword>
<keyword id="KW-0159">Chromosome partition</keyword>
<keyword id="KW-0963">Cytoplasm</keyword>
<keyword id="KW-0229">DNA integration</keyword>
<keyword id="KW-0233">DNA recombination</keyword>
<keyword id="KW-0238">DNA-binding</keyword>
<keyword id="KW-1185">Reference proteome</keyword>
<accession>Q039E1</accession>
<proteinExistence type="inferred from homology"/>
<organism>
    <name type="scientific">Lacticaseibacillus paracasei (strain ATCC 334 / BCRC 17002 / CCUG 31169 / CIP 107868 / KCTC 3260 / NRRL B-441)</name>
    <name type="common">Lactobacillus paracasei</name>
    <dbReference type="NCBI Taxonomy" id="321967"/>
    <lineage>
        <taxon>Bacteria</taxon>
        <taxon>Bacillati</taxon>
        <taxon>Bacillota</taxon>
        <taxon>Bacilli</taxon>
        <taxon>Lactobacillales</taxon>
        <taxon>Lactobacillaceae</taxon>
        <taxon>Lacticaseibacillus</taxon>
    </lineage>
</organism>
<name>XERC_LACP3</name>
<reference key="1">
    <citation type="journal article" date="2006" name="Proc. Natl. Acad. Sci. U.S.A.">
        <title>Comparative genomics of the lactic acid bacteria.</title>
        <authorList>
            <person name="Makarova K.S."/>
            <person name="Slesarev A."/>
            <person name="Wolf Y.I."/>
            <person name="Sorokin A."/>
            <person name="Mirkin B."/>
            <person name="Koonin E.V."/>
            <person name="Pavlov A."/>
            <person name="Pavlova N."/>
            <person name="Karamychev V."/>
            <person name="Polouchine N."/>
            <person name="Shakhova V."/>
            <person name="Grigoriev I."/>
            <person name="Lou Y."/>
            <person name="Rohksar D."/>
            <person name="Lucas S."/>
            <person name="Huang K."/>
            <person name="Goodstein D.M."/>
            <person name="Hawkins T."/>
            <person name="Plengvidhya V."/>
            <person name="Welker D."/>
            <person name="Hughes J."/>
            <person name="Goh Y."/>
            <person name="Benson A."/>
            <person name="Baldwin K."/>
            <person name="Lee J.-H."/>
            <person name="Diaz-Muniz I."/>
            <person name="Dosti B."/>
            <person name="Smeianov V."/>
            <person name="Wechter W."/>
            <person name="Barabote R."/>
            <person name="Lorca G."/>
            <person name="Altermann E."/>
            <person name="Barrangou R."/>
            <person name="Ganesan B."/>
            <person name="Xie Y."/>
            <person name="Rawsthorne H."/>
            <person name="Tamir D."/>
            <person name="Parker C."/>
            <person name="Breidt F."/>
            <person name="Broadbent J.R."/>
            <person name="Hutkins R."/>
            <person name="O'Sullivan D."/>
            <person name="Steele J."/>
            <person name="Unlu G."/>
            <person name="Saier M.H. Jr."/>
            <person name="Klaenhammer T."/>
            <person name="Richardson P."/>
            <person name="Kozyavkin S."/>
            <person name="Weimer B.C."/>
            <person name="Mills D.A."/>
        </authorList>
    </citation>
    <scope>NUCLEOTIDE SEQUENCE [LARGE SCALE GENOMIC DNA]</scope>
    <source>
        <strain>ATCC 334 / BCRC 17002 / CCUG 31169 / CIP 107868 / KCTC 3260 / NRRL B-441</strain>
    </source>
</reference>
<feature type="chain" id="PRO_1000070007" description="Tyrosine recombinase XerC">
    <location>
        <begin position="1"/>
        <end position="298"/>
    </location>
</feature>
<feature type="domain" description="Core-binding (CB)" evidence="3">
    <location>
        <begin position="1"/>
        <end position="85"/>
    </location>
</feature>
<feature type="domain" description="Tyr recombinase" evidence="2">
    <location>
        <begin position="106"/>
        <end position="291"/>
    </location>
</feature>
<feature type="active site" evidence="1">
    <location>
        <position position="146"/>
    </location>
</feature>
<feature type="active site" evidence="1">
    <location>
        <position position="170"/>
    </location>
</feature>
<feature type="active site" evidence="1">
    <location>
        <position position="243"/>
    </location>
</feature>
<feature type="active site" evidence="1">
    <location>
        <position position="246"/>
    </location>
</feature>
<feature type="active site" evidence="1">
    <location>
        <position position="269"/>
    </location>
</feature>
<feature type="active site" description="O-(3'-phospho-DNA)-tyrosine intermediate" evidence="1">
    <location>
        <position position="278"/>
    </location>
</feature>
<comment type="function">
    <text evidence="1">Site-specific tyrosine recombinase, which acts by catalyzing the cutting and rejoining of the recombining DNA molecules. The XerC-XerD complex is essential to convert dimers of the bacterial chromosome into monomers to permit their segregation at cell division. It also contributes to the segregational stability of plasmids.</text>
</comment>
<comment type="subunit">
    <text evidence="1">Forms a cyclic heterotetrameric complex composed of two molecules of XerC and two molecules of XerD.</text>
</comment>
<comment type="subcellular location">
    <subcellularLocation>
        <location evidence="1">Cytoplasm</location>
    </subcellularLocation>
</comment>
<comment type="similarity">
    <text evidence="1">Belongs to the 'phage' integrase family. XerC subfamily.</text>
</comment>